<protein>
    <recommendedName>
        <fullName>Equatorin</fullName>
    </recommendedName>
    <alternativeName>
        <fullName>Acrosome formation-associated factor</fullName>
    </alternativeName>
</protein>
<feature type="signal peptide" evidence="2">
    <location>
        <begin position="1"/>
        <end position="19"/>
    </location>
</feature>
<feature type="chain" id="PRO_0000286595" description="Equatorin">
    <location>
        <begin position="20"/>
        <end position="280"/>
    </location>
</feature>
<feature type="topological domain" description="Vesicular" evidence="2">
    <location>
        <begin position="20"/>
        <end position="183"/>
    </location>
</feature>
<feature type="transmembrane region" description="Helical" evidence="2">
    <location>
        <begin position="184"/>
        <end position="204"/>
    </location>
</feature>
<feature type="topological domain" description="Cytoplasmic" evidence="2">
    <location>
        <begin position="205"/>
        <end position="280"/>
    </location>
</feature>
<feature type="region of interest" description="Disordered" evidence="3">
    <location>
        <begin position="112"/>
        <end position="131"/>
    </location>
</feature>
<feature type="compositionally biased region" description="Basic and acidic residues" evidence="3">
    <location>
        <begin position="117"/>
        <end position="126"/>
    </location>
</feature>
<feature type="modified residue" description="Phosphoserine" evidence="6">
    <location>
        <position position="279"/>
    </location>
</feature>
<feature type="glycosylation site" description="N-linked (GlcNAc...) asparagine" evidence="2">
    <location>
        <position position="145"/>
    </location>
</feature>
<feature type="sequence conflict" description="In Ref. 1; ABC69296." evidence="5" ref="1">
    <original>D</original>
    <variation>G</variation>
    <location>
        <position position="27"/>
    </location>
</feature>
<accession>Q2LCV6</accession>
<accession>F1LP31</accession>
<dbReference type="EMBL" id="DQ336136">
    <property type="protein sequence ID" value="ABC69296.1"/>
    <property type="molecule type" value="mRNA"/>
</dbReference>
<dbReference type="EMBL" id="AABR06038744">
    <property type="status" value="NOT_ANNOTATED_CDS"/>
    <property type="molecule type" value="Genomic_DNA"/>
</dbReference>
<dbReference type="RefSeq" id="NP_001034434.1">
    <property type="nucleotide sequence ID" value="NM_001039345.1"/>
</dbReference>
<dbReference type="RefSeq" id="XP_017449065.1">
    <property type="nucleotide sequence ID" value="XM_017593576.1"/>
</dbReference>
<dbReference type="SMR" id="Q2LCV6"/>
<dbReference type="STRING" id="10116.ENSRNOP00000034172"/>
<dbReference type="GlyCosmos" id="Q2LCV6">
    <property type="glycosylation" value="1 site, No reported glycans"/>
</dbReference>
<dbReference type="GlyGen" id="Q2LCV6">
    <property type="glycosylation" value="1 site"/>
</dbReference>
<dbReference type="iPTMnet" id="Q2LCV6"/>
<dbReference type="PhosphoSitePlus" id="Q2LCV6"/>
<dbReference type="PaxDb" id="10116-ENSRNOP00000034172"/>
<dbReference type="GeneID" id="500502"/>
<dbReference type="KEGG" id="rno:500502"/>
<dbReference type="UCSC" id="RGD:1563332">
    <property type="organism name" value="rat"/>
</dbReference>
<dbReference type="AGR" id="RGD:1563332"/>
<dbReference type="CTD" id="54586"/>
<dbReference type="RGD" id="1563332">
    <property type="gene designation" value="Eqtn"/>
</dbReference>
<dbReference type="VEuPathDB" id="HostDB:ENSRNOG00000026323"/>
<dbReference type="eggNOG" id="KOG2248">
    <property type="taxonomic scope" value="Eukaryota"/>
</dbReference>
<dbReference type="HOGENOM" id="CLU_082439_0_0_1"/>
<dbReference type="InParanoid" id="Q2LCV6"/>
<dbReference type="TreeFam" id="TF337449"/>
<dbReference type="PRO" id="PR:Q2LCV6"/>
<dbReference type="Proteomes" id="UP000002494">
    <property type="component" value="Chromosome 5"/>
</dbReference>
<dbReference type="Bgee" id="ENSRNOG00000026323">
    <property type="expression patterns" value="Expressed in testis and 19 other cell types or tissues"/>
</dbReference>
<dbReference type="GO" id="GO:0005737">
    <property type="term" value="C:cytoplasm"/>
    <property type="evidence" value="ECO:0000266"/>
    <property type="project" value="RGD"/>
</dbReference>
<dbReference type="GO" id="GO:0005769">
    <property type="term" value="C:early endosome"/>
    <property type="evidence" value="ECO:0000266"/>
    <property type="project" value="RGD"/>
</dbReference>
<dbReference type="GO" id="GO:0002079">
    <property type="term" value="C:inner acrosomal membrane"/>
    <property type="evidence" value="ECO:0000250"/>
    <property type="project" value="UniProtKB"/>
</dbReference>
<dbReference type="GO" id="GO:0005634">
    <property type="term" value="C:nucleus"/>
    <property type="evidence" value="ECO:0000266"/>
    <property type="project" value="RGD"/>
</dbReference>
<dbReference type="GO" id="GO:0002081">
    <property type="term" value="C:outer acrosomal membrane"/>
    <property type="evidence" value="ECO:0000250"/>
    <property type="project" value="UniProtKB"/>
</dbReference>
<dbReference type="GO" id="GO:0005886">
    <property type="term" value="C:plasma membrane"/>
    <property type="evidence" value="ECO:0000266"/>
    <property type="project" value="RGD"/>
</dbReference>
<dbReference type="GO" id="GO:0060478">
    <property type="term" value="P:acrosomal vesicle exocytosis"/>
    <property type="evidence" value="ECO:0000266"/>
    <property type="project" value="RGD"/>
</dbReference>
<dbReference type="GO" id="GO:0006897">
    <property type="term" value="P:endocytosis"/>
    <property type="evidence" value="ECO:0000266"/>
    <property type="project" value="RGD"/>
</dbReference>
<dbReference type="GO" id="GO:0051649">
    <property type="term" value="P:establishment of localization in cell"/>
    <property type="evidence" value="ECO:0000266"/>
    <property type="project" value="RGD"/>
</dbReference>
<dbReference type="GO" id="GO:0007342">
    <property type="term" value="P:fusion of sperm to egg plasma membrane involved in single fertilization"/>
    <property type="evidence" value="ECO:0000266"/>
    <property type="project" value="RGD"/>
</dbReference>
<dbReference type="InterPro" id="IPR029282">
    <property type="entry name" value="Eqtn/Afaf"/>
</dbReference>
<dbReference type="PANTHER" id="PTHR36874">
    <property type="entry name" value="EQUATORIN"/>
    <property type="match status" value="1"/>
</dbReference>
<dbReference type="PANTHER" id="PTHR36874:SF1">
    <property type="entry name" value="EQUATORIN"/>
    <property type="match status" value="1"/>
</dbReference>
<dbReference type="Pfam" id="PF15339">
    <property type="entry name" value="Afaf"/>
    <property type="match status" value="1"/>
</dbReference>
<name>EQTN_RAT</name>
<comment type="function">
    <text evidence="1 4">Acrosomal membrane-anchored protein involved in the process of fertilization and in acrosome biogenesis.</text>
</comment>
<comment type="subunit">
    <text evidence="1">Interacts with SNAP25.</text>
</comment>
<comment type="subcellular location">
    <subcellularLocation>
        <location>Cytoplasmic vesicle</location>
        <location>Secretory vesicle</location>
        <location>Acrosome membrane</location>
        <topology>Single-pass type I membrane protein</topology>
    </subcellularLocation>
    <subcellularLocation>
        <location evidence="1">Cytoplasmic vesicle</location>
        <location evidence="1">Secretory vesicle</location>
        <location evidence="1">Acrosome inner membrane</location>
        <topology evidence="1">Single-pass type I membrane protein</topology>
    </subcellularLocation>
    <subcellularLocation>
        <location evidence="1">Cytoplasmic vesicle</location>
        <location evidence="1">Secretory vesicle</location>
        <location evidence="1">Acrosome outer membrane</location>
        <topology evidence="1">Single-pass type I membrane protein</topology>
    </subcellularLocation>
    <text evidence="1">In the anterior acrosome region, enriched on the inner acrosomal membrane but minimal on the outer acrosomal membrane; in contrast in the posterior acrosome region enriched on both the inner and outer acrosomal membranes.</text>
</comment>
<comment type="tissue specificity">
    <text evidence="4">Highly expressed in testis and epididymis. Low expression in other tissues.</text>
</comment>
<comment type="PTM">
    <text evidence="1">Highly N- and O-glycosylated; contains sialic acid.</text>
</comment>
<evidence type="ECO:0000250" key="1"/>
<evidence type="ECO:0000255" key="2"/>
<evidence type="ECO:0000256" key="3">
    <source>
        <dbReference type="SAM" id="MobiDB-lite"/>
    </source>
</evidence>
<evidence type="ECO:0000269" key="4">
    <source>
    </source>
</evidence>
<evidence type="ECO:0000305" key="5"/>
<evidence type="ECO:0007744" key="6">
    <source>
    </source>
</evidence>
<organism>
    <name type="scientific">Rattus norvegicus</name>
    <name type="common">Rat</name>
    <dbReference type="NCBI Taxonomy" id="10116"/>
    <lineage>
        <taxon>Eukaryota</taxon>
        <taxon>Metazoa</taxon>
        <taxon>Chordata</taxon>
        <taxon>Craniata</taxon>
        <taxon>Vertebrata</taxon>
        <taxon>Euteleostomi</taxon>
        <taxon>Mammalia</taxon>
        <taxon>Eutheria</taxon>
        <taxon>Euarchontoglires</taxon>
        <taxon>Glires</taxon>
        <taxon>Rodentia</taxon>
        <taxon>Myomorpha</taxon>
        <taxon>Muroidea</taxon>
        <taxon>Muridae</taxon>
        <taxon>Murinae</taxon>
        <taxon>Rattus</taxon>
    </lineage>
</organism>
<gene>
    <name type="primary">Eqtn</name>
    <name type="synonym">Afaf</name>
</gene>
<keyword id="KW-0968">Cytoplasmic vesicle</keyword>
<keyword id="KW-0325">Glycoprotein</keyword>
<keyword id="KW-0472">Membrane</keyword>
<keyword id="KW-0597">Phosphoprotein</keyword>
<keyword id="KW-1185">Reference proteome</keyword>
<keyword id="KW-0732">Signal</keyword>
<keyword id="KW-0812">Transmembrane</keyword>
<keyword id="KW-1133">Transmembrane helix</keyword>
<reference key="1">
    <citation type="journal article" date="2006" name="FEBS Lett.">
        <title>Afaf, a novel vesicle membrane protein, is related to acrosome formation in murine testis.</title>
        <authorList>
            <person name="Li Y.-C."/>
            <person name="Hu X.-Q."/>
            <person name="Zhang K.-Y."/>
            <person name="Guo J."/>
            <person name="Hu Z.-Y."/>
            <person name="Tao S.-X."/>
            <person name="Xiao L.-J."/>
            <person name="Wang Q.-Z."/>
            <person name="Han C.-S."/>
            <person name="Liu Y.-X."/>
        </authorList>
    </citation>
    <scope>NUCLEOTIDE SEQUENCE [MRNA]</scope>
    <scope>FUNCTION</scope>
    <scope>TISSUE SPECIFICITY</scope>
    <source>
        <strain>Sprague-Dawley</strain>
        <tissue>Testis</tissue>
    </source>
</reference>
<reference key="2">
    <citation type="journal article" date="2004" name="Nature">
        <title>Genome sequence of the Brown Norway rat yields insights into mammalian evolution.</title>
        <authorList>
            <person name="Gibbs R.A."/>
            <person name="Weinstock G.M."/>
            <person name="Metzker M.L."/>
            <person name="Muzny D.M."/>
            <person name="Sodergren E.J."/>
            <person name="Scherer S."/>
            <person name="Scott G."/>
            <person name="Steffen D."/>
            <person name="Worley K.C."/>
            <person name="Burch P.E."/>
            <person name="Okwuonu G."/>
            <person name="Hines S."/>
            <person name="Lewis L."/>
            <person name="Deramo C."/>
            <person name="Delgado O."/>
            <person name="Dugan-Rocha S."/>
            <person name="Miner G."/>
            <person name="Morgan M."/>
            <person name="Hawes A."/>
            <person name="Gill R."/>
            <person name="Holt R.A."/>
            <person name="Adams M.D."/>
            <person name="Amanatides P.G."/>
            <person name="Baden-Tillson H."/>
            <person name="Barnstead M."/>
            <person name="Chin S."/>
            <person name="Evans C.A."/>
            <person name="Ferriera S."/>
            <person name="Fosler C."/>
            <person name="Glodek A."/>
            <person name="Gu Z."/>
            <person name="Jennings D."/>
            <person name="Kraft C.L."/>
            <person name="Nguyen T."/>
            <person name="Pfannkoch C.M."/>
            <person name="Sitter C."/>
            <person name="Sutton G.G."/>
            <person name="Venter J.C."/>
            <person name="Woodage T."/>
            <person name="Smith D."/>
            <person name="Lee H.-M."/>
            <person name="Gustafson E."/>
            <person name="Cahill P."/>
            <person name="Kana A."/>
            <person name="Doucette-Stamm L."/>
            <person name="Weinstock K."/>
            <person name="Fechtel K."/>
            <person name="Weiss R.B."/>
            <person name="Dunn D.M."/>
            <person name="Green E.D."/>
            <person name="Blakesley R.W."/>
            <person name="Bouffard G.G."/>
            <person name="De Jong P.J."/>
            <person name="Osoegawa K."/>
            <person name="Zhu B."/>
            <person name="Marra M."/>
            <person name="Schein J."/>
            <person name="Bosdet I."/>
            <person name="Fjell C."/>
            <person name="Jones S."/>
            <person name="Krzywinski M."/>
            <person name="Mathewson C."/>
            <person name="Siddiqui A."/>
            <person name="Wye N."/>
            <person name="McPherson J."/>
            <person name="Zhao S."/>
            <person name="Fraser C.M."/>
            <person name="Shetty J."/>
            <person name="Shatsman S."/>
            <person name="Geer K."/>
            <person name="Chen Y."/>
            <person name="Abramzon S."/>
            <person name="Nierman W.C."/>
            <person name="Havlak P.H."/>
            <person name="Chen R."/>
            <person name="Durbin K.J."/>
            <person name="Egan A."/>
            <person name="Ren Y."/>
            <person name="Song X.-Z."/>
            <person name="Li B."/>
            <person name="Liu Y."/>
            <person name="Qin X."/>
            <person name="Cawley S."/>
            <person name="Cooney A.J."/>
            <person name="D'Souza L.M."/>
            <person name="Martin K."/>
            <person name="Wu J.Q."/>
            <person name="Gonzalez-Garay M.L."/>
            <person name="Jackson A.R."/>
            <person name="Kalafus K.J."/>
            <person name="McLeod M.P."/>
            <person name="Milosavljevic A."/>
            <person name="Virk D."/>
            <person name="Volkov A."/>
            <person name="Wheeler D.A."/>
            <person name="Zhang Z."/>
            <person name="Bailey J.A."/>
            <person name="Eichler E.E."/>
            <person name="Tuzun E."/>
            <person name="Birney E."/>
            <person name="Mongin E."/>
            <person name="Ureta-Vidal A."/>
            <person name="Woodwark C."/>
            <person name="Zdobnov E."/>
            <person name="Bork P."/>
            <person name="Suyama M."/>
            <person name="Torrents D."/>
            <person name="Alexandersson M."/>
            <person name="Trask B.J."/>
            <person name="Young J.M."/>
            <person name="Huang H."/>
            <person name="Wang H."/>
            <person name="Xing H."/>
            <person name="Daniels S."/>
            <person name="Gietzen D."/>
            <person name="Schmidt J."/>
            <person name="Stevens K."/>
            <person name="Vitt U."/>
            <person name="Wingrove J."/>
            <person name="Camara F."/>
            <person name="Mar Alba M."/>
            <person name="Abril J.F."/>
            <person name="Guigo R."/>
            <person name="Smit A."/>
            <person name="Dubchak I."/>
            <person name="Rubin E.M."/>
            <person name="Couronne O."/>
            <person name="Poliakov A."/>
            <person name="Huebner N."/>
            <person name="Ganten D."/>
            <person name="Goesele C."/>
            <person name="Hummel O."/>
            <person name="Kreitler T."/>
            <person name="Lee Y.-A."/>
            <person name="Monti J."/>
            <person name="Schulz H."/>
            <person name="Zimdahl H."/>
            <person name="Himmelbauer H."/>
            <person name="Lehrach H."/>
            <person name="Jacob H.J."/>
            <person name="Bromberg S."/>
            <person name="Gullings-Handley J."/>
            <person name="Jensen-Seaman M.I."/>
            <person name="Kwitek A.E."/>
            <person name="Lazar J."/>
            <person name="Pasko D."/>
            <person name="Tonellato P.J."/>
            <person name="Twigger S."/>
            <person name="Ponting C.P."/>
            <person name="Duarte J.M."/>
            <person name="Rice S."/>
            <person name="Goodstadt L."/>
            <person name="Beatson S.A."/>
            <person name="Emes R.D."/>
            <person name="Winter E.E."/>
            <person name="Webber C."/>
            <person name="Brandt P."/>
            <person name="Nyakatura G."/>
            <person name="Adetobi M."/>
            <person name="Chiaromonte F."/>
            <person name="Elnitski L."/>
            <person name="Eswara P."/>
            <person name="Hardison R.C."/>
            <person name="Hou M."/>
            <person name="Kolbe D."/>
            <person name="Makova K."/>
            <person name="Miller W."/>
            <person name="Nekrutenko A."/>
            <person name="Riemer C."/>
            <person name="Schwartz S."/>
            <person name="Taylor J."/>
            <person name="Yang S."/>
            <person name="Zhang Y."/>
            <person name="Lindpaintner K."/>
            <person name="Andrews T.D."/>
            <person name="Caccamo M."/>
            <person name="Clamp M."/>
            <person name="Clarke L."/>
            <person name="Curwen V."/>
            <person name="Durbin R.M."/>
            <person name="Eyras E."/>
            <person name="Searle S.M."/>
            <person name="Cooper G.M."/>
            <person name="Batzoglou S."/>
            <person name="Brudno M."/>
            <person name="Sidow A."/>
            <person name="Stone E.A."/>
            <person name="Payseur B.A."/>
            <person name="Bourque G."/>
            <person name="Lopez-Otin C."/>
            <person name="Puente X.S."/>
            <person name="Chakrabarti K."/>
            <person name="Chatterji S."/>
            <person name="Dewey C."/>
            <person name="Pachter L."/>
            <person name="Bray N."/>
            <person name="Yap V.B."/>
            <person name="Caspi A."/>
            <person name="Tesler G."/>
            <person name="Pevzner P.A."/>
            <person name="Haussler D."/>
            <person name="Roskin K.M."/>
            <person name="Baertsch R."/>
            <person name="Clawson H."/>
            <person name="Furey T.S."/>
            <person name="Hinrichs A.S."/>
            <person name="Karolchik D."/>
            <person name="Kent W.J."/>
            <person name="Rosenbloom K.R."/>
            <person name="Trumbower H."/>
            <person name="Weirauch M."/>
            <person name="Cooper D.N."/>
            <person name="Stenson P.D."/>
            <person name="Ma B."/>
            <person name="Brent M."/>
            <person name="Arumugam M."/>
            <person name="Shteynberg D."/>
            <person name="Copley R.R."/>
            <person name="Taylor M.S."/>
            <person name="Riethman H."/>
            <person name="Mudunuri U."/>
            <person name="Peterson J."/>
            <person name="Guyer M."/>
            <person name="Felsenfeld A."/>
            <person name="Old S."/>
            <person name="Mockrin S."/>
            <person name="Collins F.S."/>
        </authorList>
    </citation>
    <scope>NUCLEOTIDE SEQUENCE [LARGE SCALE GENOMIC DNA]</scope>
    <source>
        <strain>Brown Norway</strain>
    </source>
</reference>
<reference key="3">
    <citation type="journal article" date="2012" name="Nat. Commun.">
        <title>Quantitative maps of protein phosphorylation sites across 14 different rat organs and tissues.</title>
        <authorList>
            <person name="Lundby A."/>
            <person name="Secher A."/>
            <person name="Lage K."/>
            <person name="Nordsborg N.B."/>
            <person name="Dmytriyev A."/>
            <person name="Lundby C."/>
            <person name="Olsen J.V."/>
        </authorList>
    </citation>
    <scope>PHOSPHORYLATION [LARGE SCALE ANALYSIS] AT SER-279</scope>
    <scope>IDENTIFICATION BY MASS SPECTROMETRY [LARGE SCALE ANALYSIS]</scope>
</reference>
<sequence length="280" mass="31388">MDFILLIFLSGVFLPNIFSLQPTVEQDPGVTISDDQYYDEEENNTDENSAIFQKLEDNGGDTPANEKTGNYYKDIKQYVFTTPDSKGTKTEVSVTATTDLKFTMKDYKSSKATASGEEDKRSEPSRKSSTPNVPAFWTMLAKAINETAVSMDDKDLFYQAIPASDLNSTNEDQLSELEEIKLKLMLGISLMTLILLIPLLIFCFATLYKLRHLRDKTCESQYSVNPELATLSYFHPSEGSNQTVLTEESSFLPPEESGKVVIIESNTVNEAEVTEERISE</sequence>
<proteinExistence type="evidence at protein level"/>